<sequence length="209" mass="21913">MNKQPSQLAGVYAVTQPRPDLQEAVAAVLRGGVGIVQYRDKSEDADRRREEAGALCRLCEEYGALFLVNDDVDLAAAVAAHGVHLGRDDGAVVAARQQLGDTAWIGVSCYDDLDRARRLVAEGADYVAFGSIFPSPTKPESGLAPMELLRSGREATGCPTVAIGGIDAGNIHEVAAAGADAAAVVSALFAAEDPEAAARQLVAQWQRSR</sequence>
<organism>
    <name type="scientific">Halorhodospira halophila (strain DSM 244 / SL1)</name>
    <name type="common">Ectothiorhodospira halophila (strain DSM 244 / SL1)</name>
    <dbReference type="NCBI Taxonomy" id="349124"/>
    <lineage>
        <taxon>Bacteria</taxon>
        <taxon>Pseudomonadati</taxon>
        <taxon>Pseudomonadota</taxon>
        <taxon>Gammaproteobacteria</taxon>
        <taxon>Chromatiales</taxon>
        <taxon>Ectothiorhodospiraceae</taxon>
        <taxon>Halorhodospira</taxon>
    </lineage>
</organism>
<feature type="chain" id="PRO_0000336398" description="Thiamine-phosphate synthase">
    <location>
        <begin position="1"/>
        <end position="209"/>
    </location>
</feature>
<feature type="binding site" evidence="1">
    <location>
        <begin position="37"/>
        <end position="41"/>
    </location>
    <ligand>
        <name>4-amino-2-methyl-5-(diphosphooxymethyl)pyrimidine</name>
        <dbReference type="ChEBI" id="CHEBI:57841"/>
    </ligand>
</feature>
<feature type="binding site" evidence="1">
    <location>
        <position position="69"/>
    </location>
    <ligand>
        <name>4-amino-2-methyl-5-(diphosphooxymethyl)pyrimidine</name>
        <dbReference type="ChEBI" id="CHEBI:57841"/>
    </ligand>
</feature>
<feature type="binding site" evidence="1">
    <location>
        <position position="70"/>
    </location>
    <ligand>
        <name>Mg(2+)</name>
        <dbReference type="ChEBI" id="CHEBI:18420"/>
    </ligand>
</feature>
<feature type="binding site" evidence="1">
    <location>
        <position position="89"/>
    </location>
    <ligand>
        <name>Mg(2+)</name>
        <dbReference type="ChEBI" id="CHEBI:18420"/>
    </ligand>
</feature>
<feature type="binding site" evidence="1">
    <location>
        <position position="108"/>
    </location>
    <ligand>
        <name>4-amino-2-methyl-5-(diphosphooxymethyl)pyrimidine</name>
        <dbReference type="ChEBI" id="CHEBI:57841"/>
    </ligand>
</feature>
<feature type="binding site" evidence="1">
    <location>
        <begin position="135"/>
        <end position="137"/>
    </location>
    <ligand>
        <name>2-[(2R,5Z)-2-carboxy-4-methylthiazol-5(2H)-ylidene]ethyl phosphate</name>
        <dbReference type="ChEBI" id="CHEBI:62899"/>
    </ligand>
</feature>
<feature type="binding site" evidence="1">
    <location>
        <position position="138"/>
    </location>
    <ligand>
        <name>4-amino-2-methyl-5-(diphosphooxymethyl)pyrimidine</name>
        <dbReference type="ChEBI" id="CHEBI:57841"/>
    </ligand>
</feature>
<feature type="binding site" evidence="1">
    <location>
        <position position="165"/>
    </location>
    <ligand>
        <name>2-[(2R,5Z)-2-carboxy-4-methylthiazol-5(2H)-ylidene]ethyl phosphate</name>
        <dbReference type="ChEBI" id="CHEBI:62899"/>
    </ligand>
</feature>
<feature type="binding site" evidence="1">
    <location>
        <begin position="185"/>
        <end position="186"/>
    </location>
    <ligand>
        <name>2-[(2R,5Z)-2-carboxy-4-methylthiazol-5(2H)-ylidene]ethyl phosphate</name>
        <dbReference type="ChEBI" id="CHEBI:62899"/>
    </ligand>
</feature>
<accession>A1WYL4</accession>
<name>THIE_HALHL</name>
<gene>
    <name evidence="1" type="primary">thiE</name>
    <name type="ordered locus">Hhal_2012</name>
</gene>
<reference key="1">
    <citation type="submission" date="2006-12" db="EMBL/GenBank/DDBJ databases">
        <title>Complete sequence of Halorhodospira halophila SL1.</title>
        <authorList>
            <consortium name="US DOE Joint Genome Institute"/>
            <person name="Copeland A."/>
            <person name="Lucas S."/>
            <person name="Lapidus A."/>
            <person name="Barry K."/>
            <person name="Detter J.C."/>
            <person name="Glavina del Rio T."/>
            <person name="Hammon N."/>
            <person name="Israni S."/>
            <person name="Dalin E."/>
            <person name="Tice H."/>
            <person name="Pitluck S."/>
            <person name="Saunders E."/>
            <person name="Brettin T."/>
            <person name="Bruce D."/>
            <person name="Han C."/>
            <person name="Tapia R."/>
            <person name="Schmutz J."/>
            <person name="Larimer F."/>
            <person name="Land M."/>
            <person name="Hauser L."/>
            <person name="Kyrpides N."/>
            <person name="Mikhailova N."/>
            <person name="Hoff W."/>
            <person name="Richardson P."/>
        </authorList>
    </citation>
    <scope>NUCLEOTIDE SEQUENCE [LARGE SCALE GENOMIC DNA]</scope>
    <source>
        <strain>DSM 244 / SL1</strain>
    </source>
</reference>
<protein>
    <recommendedName>
        <fullName evidence="1">Thiamine-phosphate synthase</fullName>
        <shortName evidence="1">TP synthase</shortName>
        <shortName evidence="1">TPS</shortName>
        <ecNumber evidence="1">2.5.1.3</ecNumber>
    </recommendedName>
    <alternativeName>
        <fullName evidence="1">Thiamine-phosphate pyrophosphorylase</fullName>
        <shortName evidence="1">TMP pyrophosphorylase</shortName>
        <shortName evidence="1">TMP-PPase</shortName>
    </alternativeName>
</protein>
<dbReference type="EC" id="2.5.1.3" evidence="1"/>
<dbReference type="EMBL" id="CP000544">
    <property type="protein sequence ID" value="ABM62776.1"/>
    <property type="molecule type" value="Genomic_DNA"/>
</dbReference>
<dbReference type="RefSeq" id="WP_011814798.1">
    <property type="nucleotide sequence ID" value="NC_008789.1"/>
</dbReference>
<dbReference type="SMR" id="A1WYL4"/>
<dbReference type="STRING" id="349124.Hhal_2012"/>
<dbReference type="KEGG" id="hha:Hhal_2012"/>
<dbReference type="eggNOG" id="COG0352">
    <property type="taxonomic scope" value="Bacteria"/>
</dbReference>
<dbReference type="HOGENOM" id="CLU_018272_3_1_6"/>
<dbReference type="OrthoDB" id="9789949at2"/>
<dbReference type="UniPathway" id="UPA00060">
    <property type="reaction ID" value="UER00141"/>
</dbReference>
<dbReference type="Proteomes" id="UP000000647">
    <property type="component" value="Chromosome"/>
</dbReference>
<dbReference type="GO" id="GO:0005737">
    <property type="term" value="C:cytoplasm"/>
    <property type="evidence" value="ECO:0007669"/>
    <property type="project" value="TreeGrafter"/>
</dbReference>
<dbReference type="GO" id="GO:0000287">
    <property type="term" value="F:magnesium ion binding"/>
    <property type="evidence" value="ECO:0007669"/>
    <property type="project" value="UniProtKB-UniRule"/>
</dbReference>
<dbReference type="GO" id="GO:0004789">
    <property type="term" value="F:thiamine-phosphate diphosphorylase activity"/>
    <property type="evidence" value="ECO:0007669"/>
    <property type="project" value="UniProtKB-UniRule"/>
</dbReference>
<dbReference type="GO" id="GO:0009228">
    <property type="term" value="P:thiamine biosynthetic process"/>
    <property type="evidence" value="ECO:0007669"/>
    <property type="project" value="UniProtKB-KW"/>
</dbReference>
<dbReference type="GO" id="GO:0009229">
    <property type="term" value="P:thiamine diphosphate biosynthetic process"/>
    <property type="evidence" value="ECO:0007669"/>
    <property type="project" value="UniProtKB-UniRule"/>
</dbReference>
<dbReference type="CDD" id="cd00564">
    <property type="entry name" value="TMP_TenI"/>
    <property type="match status" value="1"/>
</dbReference>
<dbReference type="Gene3D" id="3.20.20.70">
    <property type="entry name" value="Aldolase class I"/>
    <property type="match status" value="1"/>
</dbReference>
<dbReference type="HAMAP" id="MF_00097">
    <property type="entry name" value="TMP_synthase"/>
    <property type="match status" value="1"/>
</dbReference>
<dbReference type="InterPro" id="IPR013785">
    <property type="entry name" value="Aldolase_TIM"/>
</dbReference>
<dbReference type="InterPro" id="IPR036206">
    <property type="entry name" value="ThiamineP_synth_sf"/>
</dbReference>
<dbReference type="InterPro" id="IPR022998">
    <property type="entry name" value="ThiamineP_synth_TenI"/>
</dbReference>
<dbReference type="InterPro" id="IPR034291">
    <property type="entry name" value="TMP_synthase"/>
</dbReference>
<dbReference type="NCBIfam" id="TIGR00693">
    <property type="entry name" value="thiE"/>
    <property type="match status" value="1"/>
</dbReference>
<dbReference type="PANTHER" id="PTHR20857">
    <property type="entry name" value="THIAMINE-PHOSPHATE PYROPHOSPHORYLASE"/>
    <property type="match status" value="1"/>
</dbReference>
<dbReference type="PANTHER" id="PTHR20857:SF15">
    <property type="entry name" value="THIAMINE-PHOSPHATE SYNTHASE"/>
    <property type="match status" value="1"/>
</dbReference>
<dbReference type="Pfam" id="PF02581">
    <property type="entry name" value="TMP-TENI"/>
    <property type="match status" value="1"/>
</dbReference>
<dbReference type="SUPFAM" id="SSF51391">
    <property type="entry name" value="Thiamin phosphate synthase"/>
    <property type="match status" value="1"/>
</dbReference>
<evidence type="ECO:0000255" key="1">
    <source>
        <dbReference type="HAMAP-Rule" id="MF_00097"/>
    </source>
</evidence>
<keyword id="KW-0460">Magnesium</keyword>
<keyword id="KW-0479">Metal-binding</keyword>
<keyword id="KW-1185">Reference proteome</keyword>
<keyword id="KW-0784">Thiamine biosynthesis</keyword>
<keyword id="KW-0808">Transferase</keyword>
<comment type="function">
    <text evidence="1">Condenses 4-methyl-5-(beta-hydroxyethyl)thiazole monophosphate (THZ-P) and 2-methyl-4-amino-5-hydroxymethyl pyrimidine pyrophosphate (HMP-PP) to form thiamine monophosphate (TMP).</text>
</comment>
<comment type="catalytic activity">
    <reaction evidence="1">
        <text>2-[(2R,5Z)-2-carboxy-4-methylthiazol-5(2H)-ylidene]ethyl phosphate + 4-amino-2-methyl-5-(diphosphooxymethyl)pyrimidine + 2 H(+) = thiamine phosphate + CO2 + diphosphate</text>
        <dbReference type="Rhea" id="RHEA:47844"/>
        <dbReference type="ChEBI" id="CHEBI:15378"/>
        <dbReference type="ChEBI" id="CHEBI:16526"/>
        <dbReference type="ChEBI" id="CHEBI:33019"/>
        <dbReference type="ChEBI" id="CHEBI:37575"/>
        <dbReference type="ChEBI" id="CHEBI:57841"/>
        <dbReference type="ChEBI" id="CHEBI:62899"/>
        <dbReference type="EC" id="2.5.1.3"/>
    </reaction>
</comment>
<comment type="catalytic activity">
    <reaction evidence="1">
        <text>2-(2-carboxy-4-methylthiazol-5-yl)ethyl phosphate + 4-amino-2-methyl-5-(diphosphooxymethyl)pyrimidine + 2 H(+) = thiamine phosphate + CO2 + diphosphate</text>
        <dbReference type="Rhea" id="RHEA:47848"/>
        <dbReference type="ChEBI" id="CHEBI:15378"/>
        <dbReference type="ChEBI" id="CHEBI:16526"/>
        <dbReference type="ChEBI" id="CHEBI:33019"/>
        <dbReference type="ChEBI" id="CHEBI:37575"/>
        <dbReference type="ChEBI" id="CHEBI:57841"/>
        <dbReference type="ChEBI" id="CHEBI:62890"/>
        <dbReference type="EC" id="2.5.1.3"/>
    </reaction>
</comment>
<comment type="catalytic activity">
    <reaction evidence="1">
        <text>4-methyl-5-(2-phosphooxyethyl)-thiazole + 4-amino-2-methyl-5-(diphosphooxymethyl)pyrimidine + H(+) = thiamine phosphate + diphosphate</text>
        <dbReference type="Rhea" id="RHEA:22328"/>
        <dbReference type="ChEBI" id="CHEBI:15378"/>
        <dbReference type="ChEBI" id="CHEBI:33019"/>
        <dbReference type="ChEBI" id="CHEBI:37575"/>
        <dbReference type="ChEBI" id="CHEBI:57841"/>
        <dbReference type="ChEBI" id="CHEBI:58296"/>
        <dbReference type="EC" id="2.5.1.3"/>
    </reaction>
</comment>
<comment type="cofactor">
    <cofactor evidence="1">
        <name>Mg(2+)</name>
        <dbReference type="ChEBI" id="CHEBI:18420"/>
    </cofactor>
    <text evidence="1">Binds 1 Mg(2+) ion per subunit.</text>
</comment>
<comment type="pathway">
    <text evidence="1">Cofactor biosynthesis; thiamine diphosphate biosynthesis; thiamine phosphate from 4-amino-2-methyl-5-diphosphomethylpyrimidine and 4-methyl-5-(2-phosphoethyl)-thiazole: step 1/1.</text>
</comment>
<comment type="similarity">
    <text evidence="1">Belongs to the thiamine-phosphate synthase family.</text>
</comment>
<proteinExistence type="inferred from homology"/>